<feature type="chain" id="PRO_0000102154" description="ATP-dependent DNA helicase RecG">
    <location>
        <begin position="1"/>
        <end position="686"/>
    </location>
</feature>
<feature type="domain" description="Helicase ATP-binding" evidence="3">
    <location>
        <begin position="279"/>
        <end position="439"/>
    </location>
</feature>
<feature type="domain" description="Helicase C-terminal" evidence="4">
    <location>
        <begin position="462"/>
        <end position="618"/>
    </location>
</feature>
<feature type="region of interest" description="Wedge domain" evidence="2">
    <location>
        <begin position="50"/>
        <end position="149"/>
    </location>
</feature>
<feature type="short sequence motif" description="DEAH box" evidence="3">
    <location>
        <begin position="392"/>
        <end position="395"/>
    </location>
</feature>
<feature type="binding site" evidence="3">
    <location>
        <begin position="292"/>
        <end position="299"/>
    </location>
    <ligand>
        <name>ATP</name>
        <dbReference type="ChEBI" id="CHEBI:30616"/>
    </ligand>
</feature>
<organism>
    <name type="scientific">Staphylococcus aureus (strain MSSA476)</name>
    <dbReference type="NCBI Taxonomy" id="282459"/>
    <lineage>
        <taxon>Bacteria</taxon>
        <taxon>Bacillati</taxon>
        <taxon>Bacillota</taxon>
        <taxon>Bacilli</taxon>
        <taxon>Bacillales</taxon>
        <taxon>Staphylococcaceae</taxon>
        <taxon>Staphylococcus</taxon>
    </lineage>
</organism>
<evidence type="ECO:0000250" key="1">
    <source>
        <dbReference type="UniProtKB" id="P24230"/>
    </source>
</evidence>
<evidence type="ECO:0000250" key="2">
    <source>
        <dbReference type="UniProtKB" id="Q9WY48"/>
    </source>
</evidence>
<evidence type="ECO:0000255" key="3">
    <source>
        <dbReference type="PROSITE-ProRule" id="PRU00541"/>
    </source>
</evidence>
<evidence type="ECO:0000255" key="4">
    <source>
        <dbReference type="PROSITE-ProRule" id="PRU00542"/>
    </source>
</evidence>
<evidence type="ECO:0000305" key="5"/>
<accession>Q6G9Y6</accession>
<protein>
    <recommendedName>
        <fullName>ATP-dependent DNA helicase RecG</fullName>
        <ecNumber evidence="1">5.6.2.4</ecNumber>
    </recommendedName>
    <alternativeName>
        <fullName>DNA branch migration protein RecG</fullName>
    </alternativeName>
    <alternativeName>
        <fullName>Probable DNA 3'-5' helicase RecG</fullName>
    </alternativeName>
</protein>
<reference key="1">
    <citation type="journal article" date="2004" name="Proc. Natl. Acad. Sci. U.S.A.">
        <title>Complete genomes of two clinical Staphylococcus aureus strains: evidence for the rapid evolution of virulence and drug resistance.</title>
        <authorList>
            <person name="Holden M.T.G."/>
            <person name="Feil E.J."/>
            <person name="Lindsay J.A."/>
            <person name="Peacock S.J."/>
            <person name="Day N.P.J."/>
            <person name="Enright M.C."/>
            <person name="Foster T.J."/>
            <person name="Moore C.E."/>
            <person name="Hurst L."/>
            <person name="Atkin R."/>
            <person name="Barron A."/>
            <person name="Bason N."/>
            <person name="Bentley S.D."/>
            <person name="Chillingworth C."/>
            <person name="Chillingworth T."/>
            <person name="Churcher C."/>
            <person name="Clark L."/>
            <person name="Corton C."/>
            <person name="Cronin A."/>
            <person name="Doggett J."/>
            <person name="Dowd L."/>
            <person name="Feltwell T."/>
            <person name="Hance Z."/>
            <person name="Harris B."/>
            <person name="Hauser H."/>
            <person name="Holroyd S."/>
            <person name="Jagels K."/>
            <person name="James K.D."/>
            <person name="Lennard N."/>
            <person name="Line A."/>
            <person name="Mayes R."/>
            <person name="Moule S."/>
            <person name="Mungall K."/>
            <person name="Ormond D."/>
            <person name="Quail M.A."/>
            <person name="Rabbinowitsch E."/>
            <person name="Rutherford K.M."/>
            <person name="Sanders M."/>
            <person name="Sharp S."/>
            <person name="Simmonds M."/>
            <person name="Stevens K."/>
            <person name="Whitehead S."/>
            <person name="Barrell B.G."/>
            <person name="Spratt B.G."/>
            <person name="Parkhill J."/>
        </authorList>
    </citation>
    <scope>NUCLEOTIDE SEQUENCE [LARGE SCALE GENOMIC DNA]</scope>
    <source>
        <strain>MSSA476</strain>
    </source>
</reference>
<sequence>MAKVNLIESPYSLLQLKGIGPKKIEVLQQLNIHTVEDLVLYLPTRYEDNTVIDLNQAEDQSNVTIEGQVYTAPVVAFFGRNNSKLTVHLMVNNIAVKCIFFNQPYLKKKIELNQTITVKGKWNRVKQEITGNRVFFNSQGTQTQENADVQLEPVYRIKEGIKQKQIRDQIRQALNDVTIHEWLTDELREKYKLETLDFTLNTLHHPKSKEDLLRARRTYAFTELFLFELRMQWLNRLEKSSDEAIEIDYGLDQVKSFIDRLPFELTEAQKSSVNEIFRDLKAPIRMHRLLQGDVGSGKTVVAAICMYALKTAGYQSALMVPTEILAEQHAESLMALFGDSMNVALLTGSVKGKKRKILLEQLENGTIDCLIGTHALIQDDVIFHNVGLVITDEQHRFGVNQRQLLREKGAMTNVLFMTATPIPRTLAISVFGEMDVSSIKQLPKGRKPIITTWAKHEQYDKVLMQMTSELKKGRQAYVICPLIESSEHLEDVQNVVALYESLQQYYGVSRVGLLHGKLSADEKDEVMQKFSNHEIDVLVSTTVVEVGVNVPNATFMMIYDADRFGLSTLHQLRGRVGRSDQQSYCVLIASPKTETGIERMTIMTQTTDGFELSERDLEMRGPGDFFGVKQSGLPDFLVANLVEDYRMLEVARDEAAELIQSGVFFENTYQHLRHFVEENLLHRSFD</sequence>
<dbReference type="EC" id="5.6.2.4" evidence="1"/>
<dbReference type="EMBL" id="BX571857">
    <property type="protein sequence ID" value="CAG42938.1"/>
    <property type="molecule type" value="Genomic_DNA"/>
</dbReference>
<dbReference type="RefSeq" id="WP_001151517.1">
    <property type="nucleotide sequence ID" value="NC_002953.3"/>
</dbReference>
<dbReference type="SMR" id="Q6G9Y6"/>
<dbReference type="KEGG" id="sas:SAS1161"/>
<dbReference type="HOGENOM" id="CLU_005122_7_1_9"/>
<dbReference type="GO" id="GO:0005524">
    <property type="term" value="F:ATP binding"/>
    <property type="evidence" value="ECO:0007669"/>
    <property type="project" value="UniProtKB-KW"/>
</dbReference>
<dbReference type="GO" id="GO:0016887">
    <property type="term" value="F:ATP hydrolysis activity"/>
    <property type="evidence" value="ECO:0007669"/>
    <property type="project" value="RHEA"/>
</dbReference>
<dbReference type="GO" id="GO:0003677">
    <property type="term" value="F:DNA binding"/>
    <property type="evidence" value="ECO:0007669"/>
    <property type="project" value="UniProtKB-KW"/>
</dbReference>
<dbReference type="GO" id="GO:0003678">
    <property type="term" value="F:DNA helicase activity"/>
    <property type="evidence" value="ECO:0007669"/>
    <property type="project" value="InterPro"/>
</dbReference>
<dbReference type="GO" id="GO:0006310">
    <property type="term" value="P:DNA recombination"/>
    <property type="evidence" value="ECO:0007669"/>
    <property type="project" value="UniProtKB-KW"/>
</dbReference>
<dbReference type="GO" id="GO:0006281">
    <property type="term" value="P:DNA repair"/>
    <property type="evidence" value="ECO:0007669"/>
    <property type="project" value="UniProtKB-KW"/>
</dbReference>
<dbReference type="CDD" id="cd17992">
    <property type="entry name" value="DEXHc_RecG"/>
    <property type="match status" value="1"/>
</dbReference>
<dbReference type="CDD" id="cd04488">
    <property type="entry name" value="RecG_wedge_OBF"/>
    <property type="match status" value="1"/>
</dbReference>
<dbReference type="Gene3D" id="2.40.50.140">
    <property type="entry name" value="Nucleic acid-binding proteins"/>
    <property type="match status" value="1"/>
</dbReference>
<dbReference type="Gene3D" id="3.40.50.300">
    <property type="entry name" value="P-loop containing nucleotide triphosphate hydrolases"/>
    <property type="match status" value="2"/>
</dbReference>
<dbReference type="InterPro" id="IPR004609">
    <property type="entry name" value="ATP-dep_DNA_helicase_RecG"/>
</dbReference>
<dbReference type="InterPro" id="IPR011545">
    <property type="entry name" value="DEAD/DEAH_box_helicase_dom"/>
</dbReference>
<dbReference type="InterPro" id="IPR014001">
    <property type="entry name" value="Helicase_ATP-bd"/>
</dbReference>
<dbReference type="InterPro" id="IPR001650">
    <property type="entry name" value="Helicase_C-like"/>
</dbReference>
<dbReference type="InterPro" id="IPR012340">
    <property type="entry name" value="NA-bd_OB-fold"/>
</dbReference>
<dbReference type="InterPro" id="IPR027417">
    <property type="entry name" value="P-loop_NTPase"/>
</dbReference>
<dbReference type="InterPro" id="IPR047112">
    <property type="entry name" value="RecG/Mfd"/>
</dbReference>
<dbReference type="InterPro" id="IPR045562">
    <property type="entry name" value="RecG_dom3_C"/>
</dbReference>
<dbReference type="InterPro" id="IPR033454">
    <property type="entry name" value="RecG_wedge"/>
</dbReference>
<dbReference type="NCBIfam" id="NF008165">
    <property type="entry name" value="PRK10917.1-3"/>
    <property type="match status" value="1"/>
</dbReference>
<dbReference type="NCBIfam" id="NF008168">
    <property type="entry name" value="PRK10917.2-2"/>
    <property type="match status" value="1"/>
</dbReference>
<dbReference type="NCBIfam" id="TIGR00643">
    <property type="entry name" value="recG"/>
    <property type="match status" value="1"/>
</dbReference>
<dbReference type="PANTHER" id="PTHR47964">
    <property type="entry name" value="ATP-DEPENDENT DNA HELICASE HOMOLOG RECG, CHLOROPLASTIC"/>
    <property type="match status" value="1"/>
</dbReference>
<dbReference type="PANTHER" id="PTHR47964:SF1">
    <property type="entry name" value="ATP-DEPENDENT DNA HELICASE HOMOLOG RECG, CHLOROPLASTIC"/>
    <property type="match status" value="1"/>
</dbReference>
<dbReference type="Pfam" id="PF00270">
    <property type="entry name" value="DEAD"/>
    <property type="match status" value="1"/>
</dbReference>
<dbReference type="Pfam" id="PF00271">
    <property type="entry name" value="Helicase_C"/>
    <property type="match status" value="1"/>
</dbReference>
<dbReference type="Pfam" id="PF19833">
    <property type="entry name" value="RecG_dom3_C"/>
    <property type="match status" value="1"/>
</dbReference>
<dbReference type="Pfam" id="PF17191">
    <property type="entry name" value="RecG_wedge"/>
    <property type="match status" value="1"/>
</dbReference>
<dbReference type="SMART" id="SM00487">
    <property type="entry name" value="DEXDc"/>
    <property type="match status" value="1"/>
</dbReference>
<dbReference type="SMART" id="SM00490">
    <property type="entry name" value="HELICc"/>
    <property type="match status" value="1"/>
</dbReference>
<dbReference type="SUPFAM" id="SSF50249">
    <property type="entry name" value="Nucleic acid-binding proteins"/>
    <property type="match status" value="1"/>
</dbReference>
<dbReference type="SUPFAM" id="SSF52540">
    <property type="entry name" value="P-loop containing nucleoside triphosphate hydrolases"/>
    <property type="match status" value="2"/>
</dbReference>
<dbReference type="PROSITE" id="PS51192">
    <property type="entry name" value="HELICASE_ATP_BIND_1"/>
    <property type="match status" value="1"/>
</dbReference>
<dbReference type="PROSITE" id="PS51194">
    <property type="entry name" value="HELICASE_CTER"/>
    <property type="match status" value="1"/>
</dbReference>
<gene>
    <name type="primary">recG</name>
    <name type="ordered locus">SAS1161</name>
</gene>
<comment type="function">
    <text evidence="1">Plays a critical role in recombination and DNA repair. Helps process Holliday junction intermediates to mature products by catalyzing branch migration. Has replication fork regression activity, unwinds stalled or blocked replication forks to make a HJ that can be resolved. Has a DNA unwinding activity characteristic of a DNA helicase with 3'-5' polarity (By similarity).</text>
</comment>
<comment type="catalytic activity">
    <reaction evidence="1">
        <text>Couples ATP hydrolysis with the unwinding of duplex DNA by translocating in the 3'-5' direction.</text>
        <dbReference type="EC" id="5.6.2.4"/>
    </reaction>
</comment>
<comment type="catalytic activity">
    <reaction evidence="1">
        <text>ATP + H2O = ADP + phosphate + H(+)</text>
        <dbReference type="Rhea" id="RHEA:13065"/>
        <dbReference type="ChEBI" id="CHEBI:15377"/>
        <dbReference type="ChEBI" id="CHEBI:15378"/>
        <dbReference type="ChEBI" id="CHEBI:30616"/>
        <dbReference type="ChEBI" id="CHEBI:43474"/>
        <dbReference type="ChEBI" id="CHEBI:456216"/>
        <dbReference type="EC" id="5.6.2.4"/>
    </reaction>
</comment>
<comment type="subunit">
    <text evidence="2">Monomer (By similarity).</text>
</comment>
<comment type="domain">
    <text evidence="2">The wedge domain within the N-terminus inserts into the replication fork junction, where the lagging and leading strand split (By similarity).</text>
</comment>
<comment type="similarity">
    <text evidence="5">Belongs to the helicase family. RecG subfamily.</text>
</comment>
<proteinExistence type="inferred from homology"/>
<name>RECG_STAAS</name>
<keyword id="KW-0067">ATP-binding</keyword>
<keyword id="KW-0227">DNA damage</keyword>
<keyword id="KW-0233">DNA recombination</keyword>
<keyword id="KW-0234">DNA repair</keyword>
<keyword id="KW-0238">DNA-binding</keyword>
<keyword id="KW-0347">Helicase</keyword>
<keyword id="KW-0378">Hydrolase</keyword>
<keyword id="KW-0413">Isomerase</keyword>
<keyword id="KW-0547">Nucleotide-binding</keyword>